<name>AAT_BACY2</name>
<feature type="chain" id="PRO_0000123834" description="Aspartate aminotransferase">
    <location>
        <begin position="1"/>
        <end position="392"/>
    </location>
</feature>
<feature type="binding site" evidence="1">
    <location>
        <position position="40"/>
    </location>
    <ligand>
        <name>L-aspartate</name>
        <dbReference type="ChEBI" id="CHEBI:29991"/>
    </ligand>
</feature>
<feature type="binding site" evidence="1">
    <location>
        <position position="126"/>
    </location>
    <ligand>
        <name>L-aspartate</name>
        <dbReference type="ChEBI" id="CHEBI:29991"/>
    </ligand>
</feature>
<feature type="binding site" evidence="1">
    <location>
        <position position="176"/>
    </location>
    <ligand>
        <name>L-aspartate</name>
        <dbReference type="ChEBI" id="CHEBI:29991"/>
    </ligand>
</feature>
<feature type="modified residue" description="N6-(pyridoxal phosphate)lysine" evidence="1">
    <location>
        <position position="239"/>
    </location>
</feature>
<feature type="sequence conflict" description="In Ref. 2; AA sequence." evidence="2" ref="2">
    <original>D</original>
    <variation>L</variation>
    <location>
        <position position="388"/>
    </location>
</feature>
<comment type="catalytic activity">
    <reaction>
        <text>L-aspartate + 2-oxoglutarate = oxaloacetate + L-glutamate</text>
        <dbReference type="Rhea" id="RHEA:21824"/>
        <dbReference type="ChEBI" id="CHEBI:16452"/>
        <dbReference type="ChEBI" id="CHEBI:16810"/>
        <dbReference type="ChEBI" id="CHEBI:29985"/>
        <dbReference type="ChEBI" id="CHEBI:29991"/>
        <dbReference type="EC" id="2.6.1.1"/>
    </reaction>
</comment>
<comment type="cofactor">
    <cofactor>
        <name>pyridoxal 5'-phosphate</name>
        <dbReference type="ChEBI" id="CHEBI:597326"/>
    </cofactor>
</comment>
<comment type="biophysicochemical properties">
    <temperatureDependence>
        <text>Optimum temperature is 70 degrees Celsius. Thermostable.</text>
    </temperatureDependence>
</comment>
<comment type="subunit">
    <text>Homodimer.</text>
</comment>
<comment type="subcellular location">
    <subcellularLocation>
        <location evidence="1">Cytoplasm</location>
    </subcellularLocation>
</comment>
<comment type="similarity">
    <text evidence="2">Belongs to the class-I pyridoxal-phosphate-dependent aminotransferase family.</text>
</comment>
<sequence>MKELLANRVKTLTPSTTLAITAKAKEMKAQGIDVIGLGAGEPDFNTPQNIMDAAIDSMQQGYTKYTPSGGLPALKQAIIEKFKRDNQLEYKPNEIIVGVGAKHVLYTLFQVILNEGDEVIIPIPYWVSYPEQVKLAGGVPVYIEATSEQNYKITAEQLKNAITDKTKAVIINSPSNPTGMVYTREELEDIAKIALENNILIVSDEIYEKLLYNGAEHFSIAQISEEVKAQTIVINGVSKSHSMTGWRIGYAAGNADIINAMTDLASHSTSNPTTASQYAAIEAYNGPQDSVEEMRKAFESRLETIYPKLSAIPGFKVVKPQGAFYLLPDVSEAAQKTGFASVDEFASALLTEANVAVIPGSGFGAPSTIRISYATSLNLIEEAIERIDRFVK</sequence>
<organism>
    <name type="scientific">Bacillus sp. (strain YM-2)</name>
    <dbReference type="NCBI Taxonomy" id="72580"/>
    <lineage>
        <taxon>Bacteria</taxon>
        <taxon>Bacillati</taxon>
        <taxon>Bacillota</taxon>
        <taxon>Bacilli</taxon>
        <taxon>Bacillales</taxon>
        <taxon>Bacillaceae</taxon>
        <taxon>Bacillus</taxon>
    </lineage>
</organism>
<protein>
    <recommendedName>
        <fullName>Aspartate aminotransferase</fullName>
        <shortName>AspAT</shortName>
        <ecNumber>2.6.1.1</ecNumber>
    </recommendedName>
    <alternativeName>
        <fullName>Transaminase A</fullName>
    </alternativeName>
</protein>
<accession>P23034</accession>
<reference key="1">
    <citation type="journal article" date="1991" name="J. Biol. Chem.">
        <title>Thermostable aspartate aminotransferase from a thermophilic Bacillus species. Gene cloning, sequence determination, and preliminary X-ray characterization.</title>
        <authorList>
            <person name="Sung M.H."/>
            <person name="Tanizawa K."/>
            <person name="Tanaka H."/>
            <person name="Kuramitsu S."/>
            <person name="Kagamiyama H."/>
            <person name="Hirotsu K."/>
            <person name="Okamoto A."/>
            <person name="Higuchi T."/>
            <person name="Soda K."/>
        </authorList>
    </citation>
    <scope>NUCLEOTIDE SEQUENCE [GENOMIC DNA]</scope>
</reference>
<reference key="2">
    <citation type="journal article" date="1990" name="J. Bacteriol.">
        <title>Purification and characterization of thermostable aspartate aminotransferase from a thermophilic Bacillus species.</title>
        <authorList>
            <person name="Sung M.H."/>
            <person name="Tanizawa K."/>
            <person name="Tanaka H."/>
            <person name="Kuramitsu S."/>
            <person name="Kagamiyama H."/>
            <person name="Soda K."/>
        </authorList>
    </citation>
    <scope>PROTEIN SEQUENCE OF 1-24 AND 387-392</scope>
</reference>
<evidence type="ECO:0000250" key="1"/>
<evidence type="ECO:0000305" key="2"/>
<proteinExistence type="evidence at protein level"/>
<keyword id="KW-0032">Aminotransferase</keyword>
<keyword id="KW-0963">Cytoplasm</keyword>
<keyword id="KW-0903">Direct protein sequencing</keyword>
<keyword id="KW-0663">Pyridoxal phosphate</keyword>
<keyword id="KW-0808">Transferase</keyword>
<dbReference type="EC" id="2.6.1.1"/>
<dbReference type="EMBL" id="M59430">
    <property type="protein sequence ID" value="AAA22250.1"/>
    <property type="molecule type" value="Genomic_DNA"/>
</dbReference>
<dbReference type="SMR" id="P23034"/>
<dbReference type="SABIO-RK" id="P23034"/>
<dbReference type="GO" id="GO:0005737">
    <property type="term" value="C:cytoplasm"/>
    <property type="evidence" value="ECO:0007669"/>
    <property type="project" value="UniProtKB-SubCell"/>
</dbReference>
<dbReference type="GO" id="GO:0004069">
    <property type="term" value="F:L-aspartate:2-oxoglutarate aminotransferase activity"/>
    <property type="evidence" value="ECO:0007669"/>
    <property type="project" value="UniProtKB-EC"/>
</dbReference>
<dbReference type="GO" id="GO:0030170">
    <property type="term" value="F:pyridoxal phosphate binding"/>
    <property type="evidence" value="ECO:0007669"/>
    <property type="project" value="InterPro"/>
</dbReference>
<dbReference type="GO" id="GO:0006520">
    <property type="term" value="P:amino acid metabolic process"/>
    <property type="evidence" value="ECO:0007669"/>
    <property type="project" value="InterPro"/>
</dbReference>
<dbReference type="GO" id="GO:0009058">
    <property type="term" value="P:biosynthetic process"/>
    <property type="evidence" value="ECO:0007669"/>
    <property type="project" value="InterPro"/>
</dbReference>
<dbReference type="CDD" id="cd00609">
    <property type="entry name" value="AAT_like"/>
    <property type="match status" value="1"/>
</dbReference>
<dbReference type="FunFam" id="3.40.640.10:FF:000033">
    <property type="entry name" value="Aspartate aminotransferase"/>
    <property type="match status" value="1"/>
</dbReference>
<dbReference type="Gene3D" id="3.90.1150.10">
    <property type="entry name" value="Aspartate Aminotransferase, domain 1"/>
    <property type="match status" value="1"/>
</dbReference>
<dbReference type="Gene3D" id="3.40.640.10">
    <property type="entry name" value="Type I PLP-dependent aspartate aminotransferase-like (Major domain)"/>
    <property type="match status" value="1"/>
</dbReference>
<dbReference type="InterPro" id="IPR004839">
    <property type="entry name" value="Aminotransferase_I/II_large"/>
</dbReference>
<dbReference type="InterPro" id="IPR050596">
    <property type="entry name" value="AspAT/PAT-like"/>
</dbReference>
<dbReference type="InterPro" id="IPR004838">
    <property type="entry name" value="NHTrfase_class1_PyrdxlP-BS"/>
</dbReference>
<dbReference type="InterPro" id="IPR015424">
    <property type="entry name" value="PyrdxlP-dep_Trfase"/>
</dbReference>
<dbReference type="InterPro" id="IPR015421">
    <property type="entry name" value="PyrdxlP-dep_Trfase_major"/>
</dbReference>
<dbReference type="InterPro" id="IPR015422">
    <property type="entry name" value="PyrdxlP-dep_Trfase_small"/>
</dbReference>
<dbReference type="PANTHER" id="PTHR46383">
    <property type="entry name" value="ASPARTATE AMINOTRANSFERASE"/>
    <property type="match status" value="1"/>
</dbReference>
<dbReference type="PANTHER" id="PTHR46383:SF1">
    <property type="entry name" value="ASPARTATE AMINOTRANSFERASE"/>
    <property type="match status" value="1"/>
</dbReference>
<dbReference type="Pfam" id="PF00155">
    <property type="entry name" value="Aminotran_1_2"/>
    <property type="match status" value="1"/>
</dbReference>
<dbReference type="PRINTS" id="PR00753">
    <property type="entry name" value="ACCSYNTHASE"/>
</dbReference>
<dbReference type="SUPFAM" id="SSF53383">
    <property type="entry name" value="PLP-dependent transferases"/>
    <property type="match status" value="1"/>
</dbReference>
<dbReference type="PROSITE" id="PS00105">
    <property type="entry name" value="AA_TRANSFER_CLASS_1"/>
    <property type="match status" value="1"/>
</dbReference>